<protein>
    <recommendedName>
        <fullName evidence="1">Large-conductance mechanosensitive channel</fullName>
    </recommendedName>
</protein>
<organism>
    <name type="scientific">Bdellovibrio bacteriovorus (strain ATCC 15356 / DSM 50701 / NCIMB 9529 / HD100)</name>
    <dbReference type="NCBI Taxonomy" id="264462"/>
    <lineage>
        <taxon>Bacteria</taxon>
        <taxon>Pseudomonadati</taxon>
        <taxon>Bdellovibrionota</taxon>
        <taxon>Bdellovibrionia</taxon>
        <taxon>Bdellovibrionales</taxon>
        <taxon>Pseudobdellovibrionaceae</taxon>
        <taxon>Bdellovibrio</taxon>
    </lineage>
</organism>
<evidence type="ECO:0000255" key="1">
    <source>
        <dbReference type="HAMAP-Rule" id="MF_00115"/>
    </source>
</evidence>
<gene>
    <name evidence="1" type="primary">mscL</name>
    <name type="ordered locus">Bd0162</name>
</gene>
<accession>Q6MRC6</accession>
<sequence length="144" mass="15350">MFKEFKTFIMRGNVLDMAVGIIIGAAFGKIVTSFVTDVLTPVLSLGMGKVDFSNLFFVLNGDSYPTLDAAKAAGVATLNYGTFLNVVLDFVIVAFSIFLIIKAANKLKRAEEPAPVTTKECPECCSSIPMKARKCAHCGSAVAS</sequence>
<comment type="function">
    <text evidence="1">Channel that opens in response to stretch forces in the membrane lipid bilayer. May participate in the regulation of osmotic pressure changes within the cell.</text>
</comment>
<comment type="subunit">
    <text evidence="1">Homopentamer.</text>
</comment>
<comment type="subcellular location">
    <subcellularLocation>
        <location evidence="1">Cell inner membrane</location>
        <topology evidence="1">Multi-pass membrane protein</topology>
    </subcellularLocation>
</comment>
<comment type="similarity">
    <text evidence="1">Belongs to the MscL family.</text>
</comment>
<proteinExistence type="inferred from homology"/>
<feature type="chain" id="PRO_0000237980" description="Large-conductance mechanosensitive channel">
    <location>
        <begin position="1"/>
        <end position="144"/>
    </location>
</feature>
<feature type="transmembrane region" description="Helical" evidence="1">
    <location>
        <begin position="14"/>
        <end position="34"/>
    </location>
</feature>
<feature type="transmembrane region" description="Helical" evidence="1">
    <location>
        <begin position="81"/>
        <end position="101"/>
    </location>
</feature>
<dbReference type="EMBL" id="BX842646">
    <property type="protein sequence ID" value="CAE77832.1"/>
    <property type="molecule type" value="Genomic_DNA"/>
</dbReference>
<dbReference type="RefSeq" id="WP_011162773.1">
    <property type="nucleotide sequence ID" value="NC_005363.1"/>
</dbReference>
<dbReference type="STRING" id="264462.Bd0162"/>
<dbReference type="GeneID" id="93011307"/>
<dbReference type="KEGG" id="bba:Bd0162"/>
<dbReference type="eggNOG" id="COG1970">
    <property type="taxonomic scope" value="Bacteria"/>
</dbReference>
<dbReference type="HOGENOM" id="CLU_095787_2_3_7"/>
<dbReference type="Proteomes" id="UP000008080">
    <property type="component" value="Chromosome"/>
</dbReference>
<dbReference type="GO" id="GO:0005886">
    <property type="term" value="C:plasma membrane"/>
    <property type="evidence" value="ECO:0007669"/>
    <property type="project" value="UniProtKB-SubCell"/>
</dbReference>
<dbReference type="GO" id="GO:0008381">
    <property type="term" value="F:mechanosensitive monoatomic ion channel activity"/>
    <property type="evidence" value="ECO:0007669"/>
    <property type="project" value="UniProtKB-UniRule"/>
</dbReference>
<dbReference type="Gene3D" id="1.10.1200.120">
    <property type="entry name" value="Large-conductance mechanosensitive channel, MscL, domain 1"/>
    <property type="match status" value="1"/>
</dbReference>
<dbReference type="HAMAP" id="MF_00115">
    <property type="entry name" value="MscL"/>
    <property type="match status" value="1"/>
</dbReference>
<dbReference type="InterPro" id="IPR019823">
    <property type="entry name" value="Mechanosensitive_channel_CS"/>
</dbReference>
<dbReference type="InterPro" id="IPR001185">
    <property type="entry name" value="MS_channel"/>
</dbReference>
<dbReference type="InterPro" id="IPR037673">
    <property type="entry name" value="MSC/AndL"/>
</dbReference>
<dbReference type="InterPro" id="IPR036019">
    <property type="entry name" value="MscL_channel"/>
</dbReference>
<dbReference type="NCBIfam" id="TIGR00220">
    <property type="entry name" value="mscL"/>
    <property type="match status" value="1"/>
</dbReference>
<dbReference type="PANTHER" id="PTHR30266:SF2">
    <property type="entry name" value="LARGE-CONDUCTANCE MECHANOSENSITIVE CHANNEL"/>
    <property type="match status" value="1"/>
</dbReference>
<dbReference type="PANTHER" id="PTHR30266">
    <property type="entry name" value="MECHANOSENSITIVE CHANNEL MSCL"/>
    <property type="match status" value="1"/>
</dbReference>
<dbReference type="Pfam" id="PF01741">
    <property type="entry name" value="MscL"/>
    <property type="match status" value="1"/>
</dbReference>
<dbReference type="PRINTS" id="PR01264">
    <property type="entry name" value="MECHCHANNEL"/>
</dbReference>
<dbReference type="SUPFAM" id="SSF81330">
    <property type="entry name" value="Gated mechanosensitive channel"/>
    <property type="match status" value="1"/>
</dbReference>
<dbReference type="PROSITE" id="PS01327">
    <property type="entry name" value="MSCL"/>
    <property type="match status" value="1"/>
</dbReference>
<keyword id="KW-0997">Cell inner membrane</keyword>
<keyword id="KW-1003">Cell membrane</keyword>
<keyword id="KW-0407">Ion channel</keyword>
<keyword id="KW-0406">Ion transport</keyword>
<keyword id="KW-0472">Membrane</keyword>
<keyword id="KW-1185">Reference proteome</keyword>
<keyword id="KW-0812">Transmembrane</keyword>
<keyword id="KW-1133">Transmembrane helix</keyword>
<keyword id="KW-0813">Transport</keyword>
<name>MSCL_BDEBA</name>
<reference key="1">
    <citation type="journal article" date="2004" name="Science">
        <title>A predator unmasked: life cycle of Bdellovibrio bacteriovorus from a genomic perspective.</title>
        <authorList>
            <person name="Rendulic S."/>
            <person name="Jagtap P."/>
            <person name="Rosinus A."/>
            <person name="Eppinger M."/>
            <person name="Baar C."/>
            <person name="Lanz C."/>
            <person name="Keller H."/>
            <person name="Lambert C."/>
            <person name="Evans K.J."/>
            <person name="Goesmann A."/>
            <person name="Meyer F."/>
            <person name="Sockett R.E."/>
            <person name="Schuster S.C."/>
        </authorList>
    </citation>
    <scope>NUCLEOTIDE SEQUENCE [LARGE SCALE GENOMIC DNA]</scope>
    <source>
        <strain>ATCC 15356 / DSM 50701 / NCIMB 9529 / HD100</strain>
    </source>
</reference>